<gene>
    <name evidence="1" type="primary">rpsK</name>
    <name type="ordered locus">FTW_1735</name>
</gene>
<evidence type="ECO:0000255" key="1">
    <source>
        <dbReference type="HAMAP-Rule" id="MF_01310"/>
    </source>
</evidence>
<evidence type="ECO:0000305" key="2"/>
<proteinExistence type="inferred from homology"/>
<protein>
    <recommendedName>
        <fullName evidence="1">Small ribosomal subunit protein uS11</fullName>
    </recommendedName>
    <alternativeName>
        <fullName evidence="2">30S ribosomal protein S11</fullName>
    </alternativeName>
</protein>
<dbReference type="EMBL" id="CP000608">
    <property type="protein sequence ID" value="ABO47411.1"/>
    <property type="molecule type" value="Genomic_DNA"/>
</dbReference>
<dbReference type="RefSeq" id="WP_003021583.1">
    <property type="nucleotide sequence ID" value="NC_009257.1"/>
</dbReference>
<dbReference type="SMR" id="A4IZR1"/>
<dbReference type="GeneID" id="93254573"/>
<dbReference type="KEGG" id="ftw:FTW_1735"/>
<dbReference type="HOGENOM" id="CLU_072439_5_0_6"/>
<dbReference type="GO" id="GO:1990904">
    <property type="term" value="C:ribonucleoprotein complex"/>
    <property type="evidence" value="ECO:0007669"/>
    <property type="project" value="UniProtKB-KW"/>
</dbReference>
<dbReference type="GO" id="GO:0005840">
    <property type="term" value="C:ribosome"/>
    <property type="evidence" value="ECO:0007669"/>
    <property type="project" value="UniProtKB-KW"/>
</dbReference>
<dbReference type="GO" id="GO:0019843">
    <property type="term" value="F:rRNA binding"/>
    <property type="evidence" value="ECO:0007669"/>
    <property type="project" value="UniProtKB-UniRule"/>
</dbReference>
<dbReference type="GO" id="GO:0003735">
    <property type="term" value="F:structural constituent of ribosome"/>
    <property type="evidence" value="ECO:0007669"/>
    <property type="project" value="InterPro"/>
</dbReference>
<dbReference type="GO" id="GO:0006412">
    <property type="term" value="P:translation"/>
    <property type="evidence" value="ECO:0007669"/>
    <property type="project" value="UniProtKB-UniRule"/>
</dbReference>
<dbReference type="FunFam" id="3.30.420.80:FF:000001">
    <property type="entry name" value="30S ribosomal protein S11"/>
    <property type="match status" value="1"/>
</dbReference>
<dbReference type="Gene3D" id="3.30.420.80">
    <property type="entry name" value="Ribosomal protein S11"/>
    <property type="match status" value="1"/>
</dbReference>
<dbReference type="HAMAP" id="MF_01310">
    <property type="entry name" value="Ribosomal_uS11"/>
    <property type="match status" value="1"/>
</dbReference>
<dbReference type="InterPro" id="IPR001971">
    <property type="entry name" value="Ribosomal_uS11"/>
</dbReference>
<dbReference type="InterPro" id="IPR019981">
    <property type="entry name" value="Ribosomal_uS11_bac-type"/>
</dbReference>
<dbReference type="InterPro" id="IPR018102">
    <property type="entry name" value="Ribosomal_uS11_CS"/>
</dbReference>
<dbReference type="InterPro" id="IPR036967">
    <property type="entry name" value="Ribosomal_uS11_sf"/>
</dbReference>
<dbReference type="NCBIfam" id="NF003698">
    <property type="entry name" value="PRK05309.1"/>
    <property type="match status" value="1"/>
</dbReference>
<dbReference type="NCBIfam" id="TIGR03632">
    <property type="entry name" value="uS11_bact"/>
    <property type="match status" value="1"/>
</dbReference>
<dbReference type="PANTHER" id="PTHR11759">
    <property type="entry name" value="40S RIBOSOMAL PROTEIN S14/30S RIBOSOMAL PROTEIN S11"/>
    <property type="match status" value="1"/>
</dbReference>
<dbReference type="Pfam" id="PF00411">
    <property type="entry name" value="Ribosomal_S11"/>
    <property type="match status" value="1"/>
</dbReference>
<dbReference type="PIRSF" id="PIRSF002131">
    <property type="entry name" value="Ribosomal_S11"/>
    <property type="match status" value="1"/>
</dbReference>
<dbReference type="SUPFAM" id="SSF53137">
    <property type="entry name" value="Translational machinery components"/>
    <property type="match status" value="1"/>
</dbReference>
<dbReference type="PROSITE" id="PS00054">
    <property type="entry name" value="RIBOSOMAL_S11"/>
    <property type="match status" value="1"/>
</dbReference>
<organism>
    <name type="scientific">Francisella tularensis subsp. tularensis (strain WY96-3418)</name>
    <dbReference type="NCBI Taxonomy" id="418136"/>
    <lineage>
        <taxon>Bacteria</taxon>
        <taxon>Pseudomonadati</taxon>
        <taxon>Pseudomonadota</taxon>
        <taxon>Gammaproteobacteria</taxon>
        <taxon>Thiotrichales</taxon>
        <taxon>Francisellaceae</taxon>
        <taxon>Francisella</taxon>
    </lineage>
</organism>
<name>RS11_FRATW</name>
<comment type="function">
    <text evidence="1">Located on the platform of the 30S subunit, it bridges several disparate RNA helices of the 16S rRNA. Forms part of the Shine-Dalgarno cleft in the 70S ribosome.</text>
</comment>
<comment type="subunit">
    <text evidence="1">Part of the 30S ribosomal subunit. Interacts with proteins S7 and S18. Binds to IF-3.</text>
</comment>
<comment type="similarity">
    <text evidence="1">Belongs to the universal ribosomal protein uS11 family.</text>
</comment>
<sequence length="129" mass="13752">MAKSVRSSKKKVKRVVTDAVAHIYSSFNNTIVTITDRQGNALSWATSGGSGFRGSRKSTPFAAQVAAERAADMALEYGVKNVDVLVKGPGSGRDSAVRALNAKNLKVTSITDVTPLPHNGCRPPKKRRV</sequence>
<reference key="1">
    <citation type="journal article" date="2007" name="PLoS ONE">
        <title>Complete genomic characterization of a pathogenic A.II strain of Francisella tularensis subspecies tularensis.</title>
        <authorList>
            <person name="Beckstrom-Sternberg S.M."/>
            <person name="Auerbach R.K."/>
            <person name="Godbole S."/>
            <person name="Pearson J.V."/>
            <person name="Beckstrom-Sternberg J.S."/>
            <person name="Deng Z."/>
            <person name="Munk C."/>
            <person name="Kubota K."/>
            <person name="Zhou Y."/>
            <person name="Bruce D."/>
            <person name="Noronha J."/>
            <person name="Scheuermann R.H."/>
            <person name="Wang A."/>
            <person name="Wei X."/>
            <person name="Wang J."/>
            <person name="Hao J."/>
            <person name="Wagner D.M."/>
            <person name="Brettin T.S."/>
            <person name="Brown N."/>
            <person name="Gilna P."/>
            <person name="Keim P.S."/>
        </authorList>
    </citation>
    <scope>NUCLEOTIDE SEQUENCE [LARGE SCALE GENOMIC DNA]</scope>
    <source>
        <strain>WY96-3418</strain>
    </source>
</reference>
<feature type="chain" id="PRO_0000294760" description="Small ribosomal subunit protein uS11">
    <location>
        <begin position="1"/>
        <end position="129"/>
    </location>
</feature>
<accession>A4IZR1</accession>
<keyword id="KW-0687">Ribonucleoprotein</keyword>
<keyword id="KW-0689">Ribosomal protein</keyword>
<keyword id="KW-0694">RNA-binding</keyword>
<keyword id="KW-0699">rRNA-binding</keyword>